<dbReference type="EMBL" id="M64388">
    <property type="protein sequence ID" value="AAA41751.1"/>
    <property type="molecule type" value="mRNA"/>
</dbReference>
<dbReference type="PIR" id="H23701">
    <property type="entry name" value="H23701"/>
</dbReference>
<dbReference type="SMR" id="P23272"/>
<dbReference type="FunCoup" id="P23272">
    <property type="interactions" value="1"/>
</dbReference>
<dbReference type="STRING" id="10116.ENSRNOP00000067753"/>
<dbReference type="GlyGen" id="P23272">
    <property type="glycosylation" value="1 site"/>
</dbReference>
<dbReference type="PaxDb" id="10116-ENSRNOP00000065858"/>
<dbReference type="AGR" id="RGD:1333590"/>
<dbReference type="eggNOG" id="ENOG502SI5J">
    <property type="taxonomic scope" value="Eukaryota"/>
</dbReference>
<dbReference type="InParanoid" id="P23272"/>
<dbReference type="PhylomeDB" id="P23272"/>
<dbReference type="Proteomes" id="UP000002494">
    <property type="component" value="Unplaced"/>
</dbReference>
<dbReference type="GO" id="GO:0005886">
    <property type="term" value="C:plasma membrane"/>
    <property type="evidence" value="ECO:0000318"/>
    <property type="project" value="GO_Central"/>
</dbReference>
<dbReference type="GO" id="GO:0004930">
    <property type="term" value="F:G protein-coupled receptor activity"/>
    <property type="evidence" value="ECO:0007669"/>
    <property type="project" value="UniProtKB-KW"/>
</dbReference>
<dbReference type="GO" id="GO:0004984">
    <property type="term" value="F:olfactory receptor activity"/>
    <property type="evidence" value="ECO:0000318"/>
    <property type="project" value="GO_Central"/>
</dbReference>
<dbReference type="GO" id="GO:0007165">
    <property type="term" value="P:signal transduction"/>
    <property type="evidence" value="ECO:0000318"/>
    <property type="project" value="GO_Central"/>
</dbReference>
<dbReference type="CDD" id="cd15918">
    <property type="entry name" value="7tmA_OR1_7-like"/>
    <property type="match status" value="1"/>
</dbReference>
<dbReference type="FunFam" id="1.10.1220.70:FF:000001">
    <property type="entry name" value="Olfactory receptor"/>
    <property type="match status" value="1"/>
</dbReference>
<dbReference type="FunFam" id="1.20.1070.10:FF:000009">
    <property type="entry name" value="Olfactory receptor"/>
    <property type="match status" value="1"/>
</dbReference>
<dbReference type="Gene3D" id="1.20.1070.10">
    <property type="entry name" value="Rhodopsin 7-helix transmembrane proteins"/>
    <property type="match status" value="1"/>
</dbReference>
<dbReference type="InterPro" id="IPR000276">
    <property type="entry name" value="GPCR_Rhodpsn"/>
</dbReference>
<dbReference type="InterPro" id="IPR017452">
    <property type="entry name" value="GPCR_Rhodpsn_7TM"/>
</dbReference>
<dbReference type="InterPro" id="IPR000725">
    <property type="entry name" value="Olfact_rcpt"/>
</dbReference>
<dbReference type="PANTHER" id="PTHR48001">
    <property type="entry name" value="OLFACTORY RECEPTOR"/>
    <property type="match status" value="1"/>
</dbReference>
<dbReference type="Pfam" id="PF13853">
    <property type="entry name" value="7tm_4"/>
    <property type="match status" value="1"/>
</dbReference>
<dbReference type="PRINTS" id="PR00237">
    <property type="entry name" value="GPCRRHODOPSN"/>
</dbReference>
<dbReference type="PRINTS" id="PR00245">
    <property type="entry name" value="OLFACTORYR"/>
</dbReference>
<dbReference type="SUPFAM" id="SSF81321">
    <property type="entry name" value="Family A G protein-coupled receptor-like"/>
    <property type="match status" value="1"/>
</dbReference>
<dbReference type="PROSITE" id="PS00237">
    <property type="entry name" value="G_PROTEIN_RECEP_F1_1"/>
    <property type="match status" value="1"/>
</dbReference>
<dbReference type="PROSITE" id="PS50262">
    <property type="entry name" value="G_PROTEIN_RECEP_F1_2"/>
    <property type="match status" value="1"/>
</dbReference>
<accession>P23272</accession>
<proteinExistence type="evidence at transcript level"/>
<protein>
    <recommendedName>
        <fullName>Olfactory receptor-like protein I9</fullName>
    </recommendedName>
</protein>
<feature type="chain" id="PRO_0000150878" description="Olfactory receptor-like protein I9">
    <location>
        <begin position="1"/>
        <end position="314"/>
    </location>
</feature>
<feature type="topological domain" description="Extracellular" evidence="1">
    <location>
        <begin position="1"/>
        <end position="25"/>
    </location>
</feature>
<feature type="transmembrane region" description="Helical; Name=1" evidence="1">
    <location>
        <begin position="26"/>
        <end position="50"/>
    </location>
</feature>
<feature type="topological domain" description="Cytoplasmic" evidence="1">
    <location>
        <begin position="51"/>
        <end position="57"/>
    </location>
</feature>
<feature type="transmembrane region" description="Helical; Name=2" evidence="1">
    <location>
        <begin position="58"/>
        <end position="79"/>
    </location>
</feature>
<feature type="topological domain" description="Extracellular" evidence="1">
    <location>
        <begin position="80"/>
        <end position="100"/>
    </location>
</feature>
<feature type="transmembrane region" description="Helical; Name=3" evidence="1">
    <location>
        <begin position="101"/>
        <end position="120"/>
    </location>
</feature>
<feature type="topological domain" description="Cytoplasmic" evidence="1">
    <location>
        <begin position="121"/>
        <end position="139"/>
    </location>
</feature>
<feature type="transmembrane region" description="Helical; Name=4" evidence="1">
    <location>
        <begin position="140"/>
        <end position="158"/>
    </location>
</feature>
<feature type="topological domain" description="Extracellular" evidence="1">
    <location>
        <begin position="159"/>
        <end position="196"/>
    </location>
</feature>
<feature type="transmembrane region" description="Helical; Name=5" evidence="1">
    <location>
        <begin position="197"/>
        <end position="219"/>
    </location>
</feature>
<feature type="topological domain" description="Cytoplasmic" evidence="1">
    <location>
        <begin position="220"/>
        <end position="236"/>
    </location>
</feature>
<feature type="transmembrane region" description="Helical; Name=6" evidence="1">
    <location>
        <begin position="237"/>
        <end position="260"/>
    </location>
</feature>
<feature type="topological domain" description="Extracellular" evidence="1">
    <location>
        <begin position="261"/>
        <end position="272"/>
    </location>
</feature>
<feature type="transmembrane region" description="Helical; Name=7" evidence="1">
    <location>
        <begin position="273"/>
        <end position="292"/>
    </location>
</feature>
<feature type="topological domain" description="Cytoplasmic" evidence="1">
    <location>
        <begin position="293"/>
        <end position="314"/>
    </location>
</feature>
<feature type="glycosylation site" description="N-linked (GlcNAc...) asparagine" evidence="1">
    <location>
        <position position="5"/>
    </location>
</feature>
<feature type="disulfide bond" evidence="2">
    <location>
        <begin position="97"/>
        <end position="189"/>
    </location>
</feature>
<comment type="function">
    <text evidence="3">Odorant receptor.</text>
</comment>
<comment type="subcellular location">
    <subcellularLocation>
        <location>Cell membrane</location>
        <topology>Multi-pass membrane protein</topology>
    </subcellularLocation>
</comment>
<comment type="tissue specificity">
    <text>Olfactory epithelium.</text>
</comment>
<comment type="similarity">
    <text evidence="2">Belongs to the G-protein coupled receptor 1 family.</text>
</comment>
<reference key="1">
    <citation type="journal article" date="1991" name="Cell">
        <title>A novel multigene family may encode odorant receptors: a molecular basis for odor recognition.</title>
        <authorList>
            <person name="Buck L."/>
            <person name="Axel R."/>
        </authorList>
    </citation>
    <scope>NUCLEOTIDE SEQUENCE [MRNA]</scope>
</reference>
<name>OLFI9_RAT</name>
<evidence type="ECO:0000255" key="1"/>
<evidence type="ECO:0000255" key="2">
    <source>
        <dbReference type="PROSITE-ProRule" id="PRU00521"/>
    </source>
</evidence>
<evidence type="ECO:0000305" key="3"/>
<organism>
    <name type="scientific">Rattus norvegicus</name>
    <name type="common">Rat</name>
    <dbReference type="NCBI Taxonomy" id="10116"/>
    <lineage>
        <taxon>Eukaryota</taxon>
        <taxon>Metazoa</taxon>
        <taxon>Chordata</taxon>
        <taxon>Craniata</taxon>
        <taxon>Vertebrata</taxon>
        <taxon>Euteleostomi</taxon>
        <taxon>Mammalia</taxon>
        <taxon>Eutheria</taxon>
        <taxon>Euarchontoglires</taxon>
        <taxon>Glires</taxon>
        <taxon>Rodentia</taxon>
        <taxon>Myomorpha</taxon>
        <taxon>Muroidea</taxon>
        <taxon>Muridae</taxon>
        <taxon>Murinae</taxon>
        <taxon>Rattus</taxon>
    </lineage>
</organism>
<sequence length="314" mass="35455">MTRRNQTAISQFFLLGLPFPPEYQHLFYALFLAMYLTTLLGNLIIIILILLDSHLHTPMYLFLSNLSFADLCFSSVTMPKLLQNMQSQVPSIPYAGCLAQIYFFLFFGDLGNFLLVAMAYDRYVAICFPLHYMSIMSPKLCVSLVVLSWVLTTFHAMLHTLLMARLSFCEDSVIPHYFCDMSTLLKVACSDTHDNELAIFILGGPIVVLPFLLIIVSYARIVSSIFKVPSSQSIHKAFSTCGSHLSVVSLFYGTVIGLYLCPSANNSTVKETVMSLMYTMVTPMLNPFIYSLRNRDIKDALEKIMCKKQIPSFL</sequence>
<keyword id="KW-1003">Cell membrane</keyword>
<keyword id="KW-1015">Disulfide bond</keyword>
<keyword id="KW-0297">G-protein coupled receptor</keyword>
<keyword id="KW-0325">Glycoprotein</keyword>
<keyword id="KW-0472">Membrane</keyword>
<keyword id="KW-0552">Olfaction</keyword>
<keyword id="KW-0675">Receptor</keyword>
<keyword id="KW-1185">Reference proteome</keyword>
<keyword id="KW-0716">Sensory transduction</keyword>
<keyword id="KW-0807">Transducer</keyword>
<keyword id="KW-0812">Transmembrane</keyword>
<keyword id="KW-1133">Transmembrane helix</keyword>